<sequence length="507" mass="58061">MTTIVEEEPLFYIVMLSIGSFFALGSIIIAVILILQHFIHYNKPNHQKYIVRIIMIAPIYAIHSLLSLFFKRQFWALFFDISRDCYEAYVLYCFFKLLICFLGGEEALKELLSKKDTQPLTWPLGYFFSFTPKKSFYRLSLGLVLQYAIIKPTLAIVAAILYYNNKYLEGDFSISQGYLWITVINNISVLIALYFLVMFYEVFQNELSPHSPILKFLVIKSVVFFLFWQTVVITVLIWFDALPKSDVYSSEHIGYFINDFLVCIEMFITSIAMGICFSYSDYVIDKSTHDEILGNGKRSSSRGIGSRSGRNIKISSKIKNIKNNFNRYRHNIGDGLSDVNNPKDIILDTIMVAKLNKNNNNTNNNEINNGIIDNNNSNNIENNGKSRNNIENNIDSQDYFNFIDLNTNDKEKQSKSKYFKIKMPDSDQSSLINLDQCESPSILYGSLNGASNNNNNNNNNNNNINNNNNNNSNNSNNNSNSQFESIDINSNSVNSNKNQSDAILFTF</sequence>
<organism>
    <name type="scientific">Dictyostelium discoideum</name>
    <name type="common">Social amoeba</name>
    <dbReference type="NCBI Taxonomy" id="44689"/>
    <lineage>
        <taxon>Eukaryota</taxon>
        <taxon>Amoebozoa</taxon>
        <taxon>Evosea</taxon>
        <taxon>Eumycetozoa</taxon>
        <taxon>Dictyostelia</taxon>
        <taxon>Dictyosteliales</taxon>
        <taxon>Dictyosteliaceae</taxon>
        <taxon>Dictyostelium</taxon>
    </lineage>
</organism>
<comment type="function">
    <text evidence="1">Probable transporter.</text>
</comment>
<comment type="subcellular location">
    <subcellularLocation>
        <location evidence="1">Cell membrane</location>
        <topology evidence="1">Multi-pass membrane protein</topology>
    </subcellularLocation>
</comment>
<comment type="similarity">
    <text evidence="4">Belongs to the TMEM184 family.</text>
</comment>
<comment type="caution">
    <text evidence="4">Despite its name, this protein may not be the one-to-one ortholog of TMEM184B.</text>
</comment>
<gene>
    <name type="primary">tmem184B</name>
    <name type="ORF">DDB_G0276041</name>
</gene>
<accession>Q75JN3</accession>
<accession>Q551Y2</accession>
<name>T1842_DICDI</name>
<protein>
    <recommendedName>
        <fullName>Transmembrane protein 184 homolog DDB_G0276041</fullName>
    </recommendedName>
</protein>
<keyword id="KW-1003">Cell membrane</keyword>
<keyword id="KW-0325">Glycoprotein</keyword>
<keyword id="KW-0472">Membrane</keyword>
<keyword id="KW-1185">Reference proteome</keyword>
<keyword id="KW-0812">Transmembrane</keyword>
<keyword id="KW-1133">Transmembrane helix</keyword>
<keyword id="KW-0813">Transport</keyword>
<feature type="chain" id="PRO_0000331552" description="Transmembrane protein 184 homolog DDB_G0276041">
    <location>
        <begin position="1"/>
        <end position="507"/>
    </location>
</feature>
<feature type="transmembrane region" description="Helical" evidence="2">
    <location>
        <begin position="13"/>
        <end position="33"/>
    </location>
</feature>
<feature type="transmembrane region" description="Helical" evidence="2">
    <location>
        <begin position="50"/>
        <end position="70"/>
    </location>
</feature>
<feature type="transmembrane region" description="Helical" evidence="2">
    <location>
        <begin position="88"/>
        <end position="108"/>
    </location>
</feature>
<feature type="transmembrane region" description="Helical" evidence="2">
    <location>
        <begin position="141"/>
        <end position="161"/>
    </location>
</feature>
<feature type="transmembrane region" description="Helical" evidence="2">
    <location>
        <begin position="179"/>
        <end position="199"/>
    </location>
</feature>
<feature type="transmembrane region" description="Helical" evidence="2">
    <location>
        <begin position="222"/>
        <end position="242"/>
    </location>
</feature>
<feature type="transmembrane region" description="Helical" evidence="2">
    <location>
        <begin position="260"/>
        <end position="280"/>
    </location>
</feature>
<feature type="region of interest" description="Disordered" evidence="3">
    <location>
        <begin position="448"/>
        <end position="500"/>
    </location>
</feature>
<feature type="compositionally biased region" description="Low complexity" evidence="3">
    <location>
        <begin position="451"/>
        <end position="500"/>
    </location>
</feature>
<feature type="glycosylation site" description="N-linked (GlcNAc...) asparagine" evidence="2">
    <location>
        <position position="360"/>
    </location>
</feature>
<feature type="glycosylation site" description="N-linked (GlcNAc...) asparagine" evidence="2">
    <location>
        <position position="375"/>
    </location>
</feature>
<feature type="glycosylation site" description="N-linked (GlcNAc...) asparagine" evidence="2">
    <location>
        <position position="470"/>
    </location>
</feature>
<feature type="glycosylation site" description="N-linked (GlcNAc...) asparagine" evidence="2">
    <location>
        <position position="473"/>
    </location>
</feature>
<feature type="glycosylation site" description="N-linked (GlcNAc...) asparagine" evidence="2">
    <location>
        <position position="477"/>
    </location>
</feature>
<feature type="glycosylation site" description="N-linked (GlcNAc...) asparagine" evidence="2">
    <location>
        <position position="498"/>
    </location>
</feature>
<evidence type="ECO:0000250" key="1"/>
<evidence type="ECO:0000255" key="2"/>
<evidence type="ECO:0000256" key="3">
    <source>
        <dbReference type="SAM" id="MobiDB-lite"/>
    </source>
</evidence>
<evidence type="ECO:0000305" key="4"/>
<reference key="1">
    <citation type="journal article" date="2002" name="Nature">
        <title>Sequence and analysis of chromosome 2 of Dictyostelium discoideum.</title>
        <authorList>
            <person name="Gloeckner G."/>
            <person name="Eichinger L."/>
            <person name="Szafranski K."/>
            <person name="Pachebat J.A."/>
            <person name="Bankier A.T."/>
            <person name="Dear P.H."/>
            <person name="Lehmann R."/>
            <person name="Baumgart C."/>
            <person name="Parra G."/>
            <person name="Abril J.F."/>
            <person name="Guigo R."/>
            <person name="Kumpf K."/>
            <person name="Tunggal B."/>
            <person name="Cox E.C."/>
            <person name="Quail M.A."/>
            <person name="Platzer M."/>
            <person name="Rosenthal A."/>
            <person name="Noegel A.A."/>
        </authorList>
    </citation>
    <scope>NUCLEOTIDE SEQUENCE [LARGE SCALE GENOMIC DNA]</scope>
    <source>
        <strain>AX4</strain>
    </source>
</reference>
<reference key="2">
    <citation type="journal article" date="2005" name="Nature">
        <title>The genome of the social amoeba Dictyostelium discoideum.</title>
        <authorList>
            <person name="Eichinger L."/>
            <person name="Pachebat J.A."/>
            <person name="Gloeckner G."/>
            <person name="Rajandream M.A."/>
            <person name="Sucgang R."/>
            <person name="Berriman M."/>
            <person name="Song J."/>
            <person name="Olsen R."/>
            <person name="Szafranski K."/>
            <person name="Xu Q."/>
            <person name="Tunggal B."/>
            <person name="Kummerfeld S."/>
            <person name="Madera M."/>
            <person name="Konfortov B.A."/>
            <person name="Rivero F."/>
            <person name="Bankier A.T."/>
            <person name="Lehmann R."/>
            <person name="Hamlin N."/>
            <person name="Davies R."/>
            <person name="Gaudet P."/>
            <person name="Fey P."/>
            <person name="Pilcher K."/>
            <person name="Chen G."/>
            <person name="Saunders D."/>
            <person name="Sodergren E.J."/>
            <person name="Davis P."/>
            <person name="Kerhornou A."/>
            <person name="Nie X."/>
            <person name="Hall N."/>
            <person name="Anjard C."/>
            <person name="Hemphill L."/>
            <person name="Bason N."/>
            <person name="Farbrother P."/>
            <person name="Desany B."/>
            <person name="Just E."/>
            <person name="Morio T."/>
            <person name="Rost R."/>
            <person name="Churcher C.M."/>
            <person name="Cooper J."/>
            <person name="Haydock S."/>
            <person name="van Driessche N."/>
            <person name="Cronin A."/>
            <person name="Goodhead I."/>
            <person name="Muzny D.M."/>
            <person name="Mourier T."/>
            <person name="Pain A."/>
            <person name="Lu M."/>
            <person name="Harper D."/>
            <person name="Lindsay R."/>
            <person name="Hauser H."/>
            <person name="James K.D."/>
            <person name="Quiles M."/>
            <person name="Madan Babu M."/>
            <person name="Saito T."/>
            <person name="Buchrieser C."/>
            <person name="Wardroper A."/>
            <person name="Felder M."/>
            <person name="Thangavelu M."/>
            <person name="Johnson D."/>
            <person name="Knights A."/>
            <person name="Loulseged H."/>
            <person name="Mungall K.L."/>
            <person name="Oliver K."/>
            <person name="Price C."/>
            <person name="Quail M.A."/>
            <person name="Urushihara H."/>
            <person name="Hernandez J."/>
            <person name="Rabbinowitsch E."/>
            <person name="Steffen D."/>
            <person name="Sanders M."/>
            <person name="Ma J."/>
            <person name="Kohara Y."/>
            <person name="Sharp S."/>
            <person name="Simmonds M.N."/>
            <person name="Spiegler S."/>
            <person name="Tivey A."/>
            <person name="Sugano S."/>
            <person name="White B."/>
            <person name="Walker D."/>
            <person name="Woodward J.R."/>
            <person name="Winckler T."/>
            <person name="Tanaka Y."/>
            <person name="Shaulsky G."/>
            <person name="Schleicher M."/>
            <person name="Weinstock G.M."/>
            <person name="Rosenthal A."/>
            <person name="Cox E.C."/>
            <person name="Chisholm R.L."/>
            <person name="Gibbs R.A."/>
            <person name="Loomis W.F."/>
            <person name="Platzer M."/>
            <person name="Kay R.R."/>
            <person name="Williams J.G."/>
            <person name="Dear P.H."/>
            <person name="Noegel A.A."/>
            <person name="Barrell B.G."/>
            <person name="Kuspa A."/>
        </authorList>
    </citation>
    <scope>NUCLEOTIDE SEQUENCE [LARGE SCALE GENOMIC DNA]</scope>
    <source>
        <strain>AX4</strain>
    </source>
</reference>
<proteinExistence type="inferred from homology"/>
<dbReference type="EMBL" id="AAFI02000014">
    <property type="protein sequence ID" value="EAL69320.1"/>
    <property type="molecule type" value="Genomic_DNA"/>
</dbReference>
<dbReference type="RefSeq" id="XP_643346.1">
    <property type="nucleotide sequence ID" value="XM_638254.1"/>
</dbReference>
<dbReference type="FunCoup" id="Q75JN3">
    <property type="interactions" value="46"/>
</dbReference>
<dbReference type="STRING" id="44689.Q75JN3"/>
<dbReference type="GlyCosmos" id="Q75JN3">
    <property type="glycosylation" value="6 sites, No reported glycans"/>
</dbReference>
<dbReference type="GlyGen" id="Q75JN3">
    <property type="glycosylation" value="6 sites"/>
</dbReference>
<dbReference type="PaxDb" id="44689-DDB0304966"/>
<dbReference type="EnsemblProtists" id="EAL69320">
    <property type="protein sequence ID" value="EAL69320"/>
    <property type="gene ID" value="DDB_G0276041"/>
</dbReference>
<dbReference type="GeneID" id="8620396"/>
<dbReference type="KEGG" id="ddi:DDB_G0276041"/>
<dbReference type="dictyBase" id="DDB_G0276041">
    <property type="gene designation" value="tmem184B"/>
</dbReference>
<dbReference type="VEuPathDB" id="AmoebaDB:DDB_G0276041"/>
<dbReference type="eggNOG" id="KOG2641">
    <property type="taxonomic scope" value="Eukaryota"/>
</dbReference>
<dbReference type="HOGENOM" id="CLU_537973_0_0_1"/>
<dbReference type="InParanoid" id="Q75JN3"/>
<dbReference type="OMA" id="VMFYEVF"/>
<dbReference type="PhylomeDB" id="Q75JN3"/>
<dbReference type="PRO" id="PR:Q75JN3"/>
<dbReference type="Proteomes" id="UP000002195">
    <property type="component" value="Chromosome 2"/>
</dbReference>
<dbReference type="GO" id="GO:0016020">
    <property type="term" value="C:membrane"/>
    <property type="evidence" value="ECO:0000250"/>
    <property type="project" value="UniProtKB"/>
</dbReference>
<dbReference type="GO" id="GO:0005886">
    <property type="term" value="C:plasma membrane"/>
    <property type="evidence" value="ECO:0007669"/>
    <property type="project" value="UniProtKB-SubCell"/>
</dbReference>
<dbReference type="GO" id="GO:0022857">
    <property type="term" value="F:transmembrane transporter activity"/>
    <property type="evidence" value="ECO:0000318"/>
    <property type="project" value="GO_Central"/>
</dbReference>
<dbReference type="InterPro" id="IPR005178">
    <property type="entry name" value="Ostalpha/TMEM184C"/>
</dbReference>
<dbReference type="PANTHER" id="PTHR23423">
    <property type="entry name" value="ORGANIC SOLUTE TRANSPORTER-RELATED"/>
    <property type="match status" value="1"/>
</dbReference>
<dbReference type="Pfam" id="PF03619">
    <property type="entry name" value="Solute_trans_a"/>
    <property type="match status" value="1"/>
</dbReference>
<dbReference type="SMART" id="SM01417">
    <property type="entry name" value="Solute_trans_a"/>
    <property type="match status" value="1"/>
</dbReference>